<sequence>MGEKKPEPLDFVKDFQEYLTQQTHHVNMISGSVSGDKEAEALQGAGTDGDQNGLDHPSVEVSLDENSGMLVDGFERTFDGKLKCRYCNYASKGTARLIEHIRIHTGEKPHRCHLCPFASAYERHLEAHMRSHTGEKPYKCELCSFRCSDRSNLSHHRRRKHKMVPIKGTRSSLSSKKMWGVLQKKTSNLNYSRRALINLSPPSMVVQKPDYLNDFTHEIPNIQTDSYESMAKTTPTGGLPRDPQELMVDNPLNQLSTLAGQLSSLPPENQNPASPDVVPCAEEKPFMMQQPSAQAVVSAVSASLPQSSSPASPEPRPPHGQRNYSPVAGPSSEPSAHTSTPSMGNSQPSTPAPTLPVQDPQLLHHCQHCDMYFADNILYTIHMGCHGYENPFQCNICGCKCKNKYDFACHFARGQHNQH</sequence>
<protein>
    <recommendedName>
        <fullName>Zinc finger protein Pegasus</fullName>
    </recommendedName>
    <alternativeName>
        <fullName>Ikaros family zinc finger protein 5</fullName>
    </alternativeName>
</protein>
<organism>
    <name type="scientific">Bos taurus</name>
    <name type="common">Bovine</name>
    <dbReference type="NCBI Taxonomy" id="9913"/>
    <lineage>
        <taxon>Eukaryota</taxon>
        <taxon>Metazoa</taxon>
        <taxon>Chordata</taxon>
        <taxon>Craniata</taxon>
        <taxon>Vertebrata</taxon>
        <taxon>Euteleostomi</taxon>
        <taxon>Mammalia</taxon>
        <taxon>Eutheria</taxon>
        <taxon>Laurasiatheria</taxon>
        <taxon>Artiodactyla</taxon>
        <taxon>Ruminantia</taxon>
        <taxon>Pecora</taxon>
        <taxon>Bovidae</taxon>
        <taxon>Bovinae</taxon>
        <taxon>Bos</taxon>
    </lineage>
</organism>
<reference key="1">
    <citation type="submission" date="2007-03" db="EMBL/GenBank/DDBJ databases">
        <authorList>
            <consortium name="NIH - Mammalian Gene Collection (MGC) project"/>
        </authorList>
    </citation>
    <scope>NUCLEOTIDE SEQUENCE [LARGE SCALE MRNA]</scope>
    <source>
        <strain>Hereford</strain>
        <tissue>Fetal skin</tissue>
    </source>
</reference>
<gene>
    <name type="primary">IKZF5</name>
</gene>
<comment type="function">
    <text evidence="2">Transcriptional repressor that binds the core 5'GNNTGTNG-3' DNA consensus sequence (By similarity). Involved in megakaryocyte differentiation (By similarity).</text>
</comment>
<comment type="subunit">
    <text evidence="1">Self-associates. Interacts with other family members; IKZF1, IKZF2, IKZF3 and IKZF4 (By similarity).</text>
</comment>
<comment type="subcellular location">
    <subcellularLocation>
        <location evidence="2">Nucleus</location>
    </subcellularLocation>
</comment>
<comment type="domain">
    <text evidence="1">The N-terminal zinc fingers are involved in sequence-specific DNA binding and heterotypic associations with other family members.</text>
</comment>
<comment type="domain">
    <text evidence="1">C-terminal zinc fingers mediate homodimerization.</text>
</comment>
<comment type="miscellaneous">
    <text>'Pegasus' was the winged horse in Greek mythology.</text>
</comment>
<comment type="similarity">
    <text evidence="5">Belongs to the Ikaros C2H2-type zinc-finger protein family.</text>
</comment>
<keyword id="KW-0238">DNA-binding</keyword>
<keyword id="KW-1017">Isopeptide bond</keyword>
<keyword id="KW-0479">Metal-binding</keyword>
<keyword id="KW-0539">Nucleus</keyword>
<keyword id="KW-1185">Reference proteome</keyword>
<keyword id="KW-0677">Repeat</keyword>
<keyword id="KW-0678">Repressor</keyword>
<keyword id="KW-0804">Transcription</keyword>
<keyword id="KW-0805">Transcription regulation</keyword>
<keyword id="KW-0832">Ubl conjugation</keyword>
<keyword id="KW-0862">Zinc</keyword>
<keyword id="KW-0863">Zinc-finger</keyword>
<proteinExistence type="evidence at transcript level"/>
<dbReference type="EMBL" id="BC134611">
    <property type="protein sequence ID" value="AAI34612.1"/>
    <property type="molecule type" value="mRNA"/>
</dbReference>
<dbReference type="RefSeq" id="NP_001077182.1">
    <property type="nucleotide sequence ID" value="NM_001083713.1"/>
</dbReference>
<dbReference type="RefSeq" id="XP_005225909.1">
    <property type="nucleotide sequence ID" value="XM_005225852.5"/>
</dbReference>
<dbReference type="FunCoup" id="A4IFJ6">
    <property type="interactions" value="2915"/>
</dbReference>
<dbReference type="STRING" id="9913.ENSBTAP00000064053"/>
<dbReference type="PaxDb" id="9913-ENSBTAP00000032681"/>
<dbReference type="Ensembl" id="ENSBTAT00000032752.4">
    <property type="protein sequence ID" value="ENSBTAP00000032681.3"/>
    <property type="gene ID" value="ENSBTAG00000023847.5"/>
</dbReference>
<dbReference type="GeneID" id="531250"/>
<dbReference type="KEGG" id="bta:531250"/>
<dbReference type="CTD" id="64376"/>
<dbReference type="VEuPathDB" id="HostDB:ENSBTAG00000023847"/>
<dbReference type="VGNC" id="VGNC:30106">
    <property type="gene designation" value="IKZF5"/>
</dbReference>
<dbReference type="eggNOG" id="KOG1721">
    <property type="taxonomic scope" value="Eukaryota"/>
</dbReference>
<dbReference type="GeneTree" id="ENSGT00940000155035"/>
<dbReference type="HOGENOM" id="CLU_734778_0_0_1"/>
<dbReference type="InParanoid" id="A4IFJ6"/>
<dbReference type="OMA" id="FMIQQPT"/>
<dbReference type="OrthoDB" id="5576026at2759"/>
<dbReference type="TreeFam" id="TF331860"/>
<dbReference type="Proteomes" id="UP000009136">
    <property type="component" value="Chromosome 26"/>
</dbReference>
<dbReference type="Bgee" id="ENSBTAG00000023847">
    <property type="expression patterns" value="Expressed in spermatid and 106 other cell types or tissues"/>
</dbReference>
<dbReference type="GO" id="GO:0005634">
    <property type="term" value="C:nucleus"/>
    <property type="evidence" value="ECO:0000250"/>
    <property type="project" value="UniProtKB"/>
</dbReference>
<dbReference type="GO" id="GO:0003682">
    <property type="term" value="F:chromatin binding"/>
    <property type="evidence" value="ECO:0000250"/>
    <property type="project" value="UniProtKB"/>
</dbReference>
<dbReference type="GO" id="GO:0003700">
    <property type="term" value="F:DNA-binding transcription factor activity"/>
    <property type="evidence" value="ECO:0000318"/>
    <property type="project" value="GO_Central"/>
</dbReference>
<dbReference type="GO" id="GO:0000978">
    <property type="term" value="F:RNA polymerase II cis-regulatory region sequence-specific DNA binding"/>
    <property type="evidence" value="ECO:0000318"/>
    <property type="project" value="GO_Central"/>
</dbReference>
<dbReference type="GO" id="GO:0008270">
    <property type="term" value="F:zinc ion binding"/>
    <property type="evidence" value="ECO:0007669"/>
    <property type="project" value="UniProtKB-KW"/>
</dbReference>
<dbReference type="GO" id="GO:0006357">
    <property type="term" value="P:regulation of transcription by RNA polymerase II"/>
    <property type="evidence" value="ECO:0000318"/>
    <property type="project" value="GO_Central"/>
</dbReference>
<dbReference type="FunFam" id="3.30.160.60:FF:000402">
    <property type="entry name" value="IKAROS family zinc finger 5"/>
    <property type="match status" value="1"/>
</dbReference>
<dbReference type="FunFam" id="3.30.160.60:FF:000924">
    <property type="entry name" value="IKAROS family zinc finger 5"/>
    <property type="match status" value="1"/>
</dbReference>
<dbReference type="FunFam" id="3.30.160.60:FF:001097">
    <property type="entry name" value="IKAROS family zinc finger 5"/>
    <property type="match status" value="1"/>
</dbReference>
<dbReference type="Gene3D" id="3.30.160.60">
    <property type="entry name" value="Classic Zinc Finger"/>
    <property type="match status" value="4"/>
</dbReference>
<dbReference type="InterPro" id="IPR050589">
    <property type="entry name" value="Ikaros_C2H2-ZF"/>
</dbReference>
<dbReference type="InterPro" id="IPR036236">
    <property type="entry name" value="Znf_C2H2_sf"/>
</dbReference>
<dbReference type="InterPro" id="IPR013087">
    <property type="entry name" value="Znf_C2H2_type"/>
</dbReference>
<dbReference type="PANTHER" id="PTHR24404">
    <property type="entry name" value="ZINC FINGER PROTEIN"/>
    <property type="match status" value="1"/>
</dbReference>
<dbReference type="PANTHER" id="PTHR24404:SF55">
    <property type="entry name" value="ZINC FINGER PROTEIN PEGASUS"/>
    <property type="match status" value="1"/>
</dbReference>
<dbReference type="SMART" id="SM00355">
    <property type="entry name" value="ZnF_C2H2"/>
    <property type="match status" value="5"/>
</dbReference>
<dbReference type="SUPFAM" id="SSF57667">
    <property type="entry name" value="beta-beta-alpha zinc fingers"/>
    <property type="match status" value="3"/>
</dbReference>
<dbReference type="PROSITE" id="PS00028">
    <property type="entry name" value="ZINC_FINGER_C2H2_1"/>
    <property type="match status" value="3"/>
</dbReference>
<dbReference type="PROSITE" id="PS50157">
    <property type="entry name" value="ZINC_FINGER_C2H2_2"/>
    <property type="match status" value="4"/>
</dbReference>
<name>IKZF5_BOVIN</name>
<accession>A4IFJ6</accession>
<evidence type="ECO:0000250" key="1"/>
<evidence type="ECO:0000250" key="2">
    <source>
        <dbReference type="UniProtKB" id="Q9H5V7"/>
    </source>
</evidence>
<evidence type="ECO:0000255" key="3">
    <source>
        <dbReference type="PROSITE-ProRule" id="PRU00042"/>
    </source>
</evidence>
<evidence type="ECO:0000256" key="4">
    <source>
        <dbReference type="SAM" id="MobiDB-lite"/>
    </source>
</evidence>
<evidence type="ECO:0000305" key="5"/>
<feature type="chain" id="PRO_0000299470" description="Zinc finger protein Pegasus">
    <location>
        <begin position="1"/>
        <end position="419"/>
    </location>
</feature>
<feature type="zinc finger region" description="C2H2-type 1" evidence="3">
    <location>
        <begin position="82"/>
        <end position="104"/>
    </location>
</feature>
<feature type="zinc finger region" description="C2H2-type 2" evidence="3">
    <location>
        <begin position="110"/>
        <end position="132"/>
    </location>
</feature>
<feature type="zinc finger region" description="C2H2-type 3" evidence="3">
    <location>
        <begin position="138"/>
        <end position="161"/>
    </location>
</feature>
<feature type="zinc finger region" description="C2H2-type 4" evidence="3">
    <location>
        <begin position="364"/>
        <end position="386"/>
    </location>
</feature>
<feature type="zinc finger region" description="C2H2-type 5" evidence="3">
    <location>
        <begin position="392"/>
        <end position="416"/>
    </location>
</feature>
<feature type="region of interest" description="Disordered" evidence="4">
    <location>
        <begin position="223"/>
        <end position="245"/>
    </location>
</feature>
<feature type="region of interest" description="Disordered" evidence="4">
    <location>
        <begin position="288"/>
        <end position="356"/>
    </location>
</feature>
<feature type="compositionally biased region" description="Polar residues" evidence="4">
    <location>
        <begin position="223"/>
        <end position="236"/>
    </location>
</feature>
<feature type="compositionally biased region" description="Low complexity" evidence="4">
    <location>
        <begin position="289"/>
        <end position="311"/>
    </location>
</feature>
<feature type="compositionally biased region" description="Polar residues" evidence="4">
    <location>
        <begin position="332"/>
        <end position="349"/>
    </location>
</feature>
<feature type="cross-link" description="Glycyl lysine isopeptide (Lys-Gly) (interchain with G-Cter in SUMO2)" evidence="2">
    <location>
        <position position="5"/>
    </location>
</feature>
<feature type="cross-link" description="Glycyl lysine isopeptide (Lys-Gly) (interchain with G-Cter in SUMO2)" evidence="2">
    <location>
        <position position="185"/>
    </location>
</feature>